<name>OGT_SACI4</name>
<keyword id="KW-0963">Cytoplasm</keyword>
<keyword id="KW-0227">DNA damage</keyword>
<keyword id="KW-0234">DNA repair</keyword>
<keyword id="KW-0489">Methyltransferase</keyword>
<keyword id="KW-0808">Transferase</keyword>
<comment type="function">
    <text evidence="1">Involved in the cellular defense against the biological effects of O6-methylguanine (O6-MeG) and O4-methylthymine (O4-MeT) in DNA. Repairs the methylated nucleobase in DNA by stoichiometrically transferring the methyl group to a cysteine residue in the enzyme. This is a suicide reaction: the enzyme is irreversibly inactivated.</text>
</comment>
<comment type="catalytic activity">
    <reaction evidence="1">
        <text>a 6-O-methyl-2'-deoxyguanosine in DNA + L-cysteinyl-[protein] = S-methyl-L-cysteinyl-[protein] + a 2'-deoxyguanosine in DNA</text>
        <dbReference type="Rhea" id="RHEA:24000"/>
        <dbReference type="Rhea" id="RHEA-COMP:10131"/>
        <dbReference type="Rhea" id="RHEA-COMP:10132"/>
        <dbReference type="Rhea" id="RHEA-COMP:11367"/>
        <dbReference type="Rhea" id="RHEA-COMP:11368"/>
        <dbReference type="ChEBI" id="CHEBI:29950"/>
        <dbReference type="ChEBI" id="CHEBI:82612"/>
        <dbReference type="ChEBI" id="CHEBI:85445"/>
        <dbReference type="ChEBI" id="CHEBI:85448"/>
        <dbReference type="EC" id="2.1.1.63"/>
    </reaction>
</comment>
<comment type="catalytic activity">
    <reaction evidence="1">
        <text>a 4-O-methyl-thymidine in DNA + L-cysteinyl-[protein] = a thymidine in DNA + S-methyl-L-cysteinyl-[protein]</text>
        <dbReference type="Rhea" id="RHEA:53428"/>
        <dbReference type="Rhea" id="RHEA-COMP:10131"/>
        <dbReference type="Rhea" id="RHEA-COMP:10132"/>
        <dbReference type="Rhea" id="RHEA-COMP:13555"/>
        <dbReference type="Rhea" id="RHEA-COMP:13556"/>
        <dbReference type="ChEBI" id="CHEBI:29950"/>
        <dbReference type="ChEBI" id="CHEBI:82612"/>
        <dbReference type="ChEBI" id="CHEBI:137386"/>
        <dbReference type="ChEBI" id="CHEBI:137387"/>
        <dbReference type="EC" id="2.1.1.63"/>
    </reaction>
</comment>
<comment type="subcellular location">
    <subcellularLocation>
        <location evidence="1">Cytoplasm</location>
    </subcellularLocation>
</comment>
<comment type="miscellaneous">
    <text>This enzyme catalyzes only one turnover and therefore is not strictly catalytic. According to one definition, an enzyme is a biocatalyst that acts repeatedly and over many reaction cycles.</text>
</comment>
<comment type="similarity">
    <text evidence="1">Belongs to the MGMT family.</text>
</comment>
<proteinExistence type="inferred from homology"/>
<feature type="chain" id="PRO_1000212904" description="Methylated-DNA--protein-cysteine methyltransferase">
    <location>
        <begin position="1"/>
        <end position="151"/>
    </location>
</feature>
<feature type="active site" description="Nucleophile; methyl group acceptor" evidence="1">
    <location>
        <position position="119"/>
    </location>
</feature>
<reference key="1">
    <citation type="journal article" date="2009" name="Proc. Natl. Acad. Sci. U.S.A.">
        <title>Biogeography of the Sulfolobus islandicus pan-genome.</title>
        <authorList>
            <person name="Reno M.L."/>
            <person name="Held N.L."/>
            <person name="Fields C.J."/>
            <person name="Burke P.V."/>
            <person name="Whitaker R.J."/>
        </authorList>
    </citation>
    <scope>NUCLEOTIDE SEQUENCE [LARGE SCALE GENOMIC DNA]</scope>
    <source>
        <strain>M.14.25 / Kamchatka #1</strain>
    </source>
</reference>
<sequence length="151" mass="17037">MLVYGLYKSPLGYITVAKDDKGFIMLDFCDCVEGNSRDDSSFTEFFHKLDLYFEGKPINLREPINLKTYPFRLSVFKEVMKIPWGKVMTYKQIADSLGTSPRAVGMALSKNPILLIIPCHRVIAENGIGGYSRGVKLKRALLELEGVKIPE</sequence>
<accession>C3MUC6</accession>
<dbReference type="EC" id="2.1.1.63" evidence="1"/>
<dbReference type="EMBL" id="CP001400">
    <property type="protein sequence ID" value="ACP37160.1"/>
    <property type="molecule type" value="Genomic_DNA"/>
</dbReference>
<dbReference type="RefSeq" id="WP_010923891.1">
    <property type="nucleotide sequence ID" value="NC_012588.1"/>
</dbReference>
<dbReference type="SMR" id="C3MUC6"/>
<dbReference type="KEGG" id="sia:M1425_0271"/>
<dbReference type="HOGENOM" id="CLU_000445_52_2_2"/>
<dbReference type="Proteomes" id="UP000001350">
    <property type="component" value="Chromosome"/>
</dbReference>
<dbReference type="GO" id="GO:0005737">
    <property type="term" value="C:cytoplasm"/>
    <property type="evidence" value="ECO:0007669"/>
    <property type="project" value="UniProtKB-SubCell"/>
</dbReference>
<dbReference type="GO" id="GO:0003908">
    <property type="term" value="F:methylated-DNA-[protein]-cysteine S-methyltransferase activity"/>
    <property type="evidence" value="ECO:0007669"/>
    <property type="project" value="UniProtKB-UniRule"/>
</dbReference>
<dbReference type="GO" id="GO:0006307">
    <property type="term" value="P:DNA alkylation repair"/>
    <property type="evidence" value="ECO:0007669"/>
    <property type="project" value="UniProtKB-UniRule"/>
</dbReference>
<dbReference type="GO" id="GO:0032259">
    <property type="term" value="P:methylation"/>
    <property type="evidence" value="ECO:0007669"/>
    <property type="project" value="UniProtKB-KW"/>
</dbReference>
<dbReference type="CDD" id="cd06445">
    <property type="entry name" value="ATase"/>
    <property type="match status" value="1"/>
</dbReference>
<dbReference type="FunFam" id="1.10.10.10:FF:000214">
    <property type="entry name" value="Methylated-DNA--protein-cysteine methyltransferase"/>
    <property type="match status" value="1"/>
</dbReference>
<dbReference type="Gene3D" id="3.30.160.70">
    <property type="entry name" value="Methylated DNA-protein cysteine methyltransferase domain"/>
    <property type="match status" value="1"/>
</dbReference>
<dbReference type="Gene3D" id="1.10.10.10">
    <property type="entry name" value="Winged helix-like DNA-binding domain superfamily/Winged helix DNA-binding domain"/>
    <property type="match status" value="1"/>
</dbReference>
<dbReference type="HAMAP" id="MF_00772">
    <property type="entry name" value="OGT"/>
    <property type="match status" value="1"/>
</dbReference>
<dbReference type="InterPro" id="IPR001497">
    <property type="entry name" value="MethylDNA_cys_MeTrfase_AS"/>
</dbReference>
<dbReference type="InterPro" id="IPR014048">
    <property type="entry name" value="MethylDNA_cys_MeTrfase_DNA-bd"/>
</dbReference>
<dbReference type="InterPro" id="IPR036217">
    <property type="entry name" value="MethylDNA_cys_MeTrfase_DNAb"/>
</dbReference>
<dbReference type="InterPro" id="IPR008332">
    <property type="entry name" value="MethylG_MeTrfase_N"/>
</dbReference>
<dbReference type="InterPro" id="IPR023546">
    <property type="entry name" value="MGMT"/>
</dbReference>
<dbReference type="InterPro" id="IPR036631">
    <property type="entry name" value="MGMT_N_sf"/>
</dbReference>
<dbReference type="InterPro" id="IPR036388">
    <property type="entry name" value="WH-like_DNA-bd_sf"/>
</dbReference>
<dbReference type="NCBIfam" id="TIGR00589">
    <property type="entry name" value="ogt"/>
    <property type="match status" value="1"/>
</dbReference>
<dbReference type="PANTHER" id="PTHR10815">
    <property type="entry name" value="METHYLATED-DNA--PROTEIN-CYSTEINE METHYLTRANSFERASE"/>
    <property type="match status" value="1"/>
</dbReference>
<dbReference type="PANTHER" id="PTHR10815:SF13">
    <property type="entry name" value="METHYLATED-DNA--PROTEIN-CYSTEINE METHYLTRANSFERASE"/>
    <property type="match status" value="1"/>
</dbReference>
<dbReference type="Pfam" id="PF01035">
    <property type="entry name" value="DNA_binding_1"/>
    <property type="match status" value="1"/>
</dbReference>
<dbReference type="Pfam" id="PF02870">
    <property type="entry name" value="Methyltransf_1N"/>
    <property type="match status" value="1"/>
</dbReference>
<dbReference type="SUPFAM" id="SSF53155">
    <property type="entry name" value="Methylated DNA-protein cysteine methyltransferase domain"/>
    <property type="match status" value="1"/>
</dbReference>
<dbReference type="SUPFAM" id="SSF46767">
    <property type="entry name" value="Methylated DNA-protein cysteine methyltransferase, C-terminal domain"/>
    <property type="match status" value="1"/>
</dbReference>
<dbReference type="PROSITE" id="PS00374">
    <property type="entry name" value="MGMT"/>
    <property type="match status" value="1"/>
</dbReference>
<organism>
    <name type="scientific">Saccharolobus islandicus (strain M.14.25 / Kamchatka #1)</name>
    <name type="common">Sulfolobus islandicus</name>
    <dbReference type="NCBI Taxonomy" id="427317"/>
    <lineage>
        <taxon>Archaea</taxon>
        <taxon>Thermoproteota</taxon>
        <taxon>Thermoprotei</taxon>
        <taxon>Sulfolobales</taxon>
        <taxon>Sulfolobaceae</taxon>
        <taxon>Saccharolobus</taxon>
    </lineage>
</organism>
<protein>
    <recommendedName>
        <fullName evidence="1">Methylated-DNA--protein-cysteine methyltransferase</fullName>
        <ecNumber evidence="1">2.1.1.63</ecNumber>
    </recommendedName>
    <alternativeName>
        <fullName evidence="1">6-O-methylguanine-DNA methyltransferase</fullName>
        <shortName evidence="1">MGMT</shortName>
    </alternativeName>
    <alternativeName>
        <fullName evidence="1">O-6-methylguanine-DNA-alkyltransferase</fullName>
    </alternativeName>
</protein>
<gene>
    <name evidence="1" type="primary">ogt</name>
    <name type="ordered locus">M1425_0271</name>
</gene>
<evidence type="ECO:0000255" key="1">
    <source>
        <dbReference type="HAMAP-Rule" id="MF_00772"/>
    </source>
</evidence>